<dbReference type="EC" id="2.7.1.148" evidence="2"/>
<dbReference type="EMBL" id="AM408590">
    <property type="protein sequence ID" value="CAL71055.1"/>
    <property type="status" value="ALT_INIT"/>
    <property type="molecule type" value="Genomic_DNA"/>
</dbReference>
<dbReference type="RefSeq" id="WP_003898690.1">
    <property type="nucleotide sequence ID" value="NC_008769.1"/>
</dbReference>
<dbReference type="SMR" id="A1KHE9"/>
<dbReference type="KEGG" id="mbb:BCG_1068"/>
<dbReference type="HOGENOM" id="CLU_053057_1_1_11"/>
<dbReference type="UniPathway" id="UPA00056">
    <property type="reaction ID" value="UER00094"/>
</dbReference>
<dbReference type="Proteomes" id="UP000001472">
    <property type="component" value="Chromosome"/>
</dbReference>
<dbReference type="GO" id="GO:0050515">
    <property type="term" value="F:4-(cytidine 5'-diphospho)-2-C-methyl-D-erythritol kinase activity"/>
    <property type="evidence" value="ECO:0007669"/>
    <property type="project" value="UniProtKB-UniRule"/>
</dbReference>
<dbReference type="GO" id="GO:0005524">
    <property type="term" value="F:ATP binding"/>
    <property type="evidence" value="ECO:0007669"/>
    <property type="project" value="UniProtKB-UniRule"/>
</dbReference>
<dbReference type="GO" id="GO:0019288">
    <property type="term" value="P:isopentenyl diphosphate biosynthetic process, methylerythritol 4-phosphate pathway"/>
    <property type="evidence" value="ECO:0007669"/>
    <property type="project" value="UniProtKB-UniRule"/>
</dbReference>
<dbReference type="GO" id="GO:0016114">
    <property type="term" value="P:terpenoid biosynthetic process"/>
    <property type="evidence" value="ECO:0007669"/>
    <property type="project" value="InterPro"/>
</dbReference>
<dbReference type="FunFam" id="3.30.230.10:FF:000076">
    <property type="entry name" value="4-diphosphocytidyl-2-C-methyl-D-erythritol kinase"/>
    <property type="match status" value="1"/>
</dbReference>
<dbReference type="FunFam" id="3.30.70.890:FF:000013">
    <property type="entry name" value="4-diphosphocytidyl-2-C-methyl-D-erythritol kinase"/>
    <property type="match status" value="1"/>
</dbReference>
<dbReference type="Gene3D" id="3.30.230.10">
    <property type="match status" value="1"/>
</dbReference>
<dbReference type="Gene3D" id="3.30.70.890">
    <property type="entry name" value="GHMP kinase, C-terminal domain"/>
    <property type="match status" value="1"/>
</dbReference>
<dbReference type="HAMAP" id="MF_00061">
    <property type="entry name" value="IspE"/>
    <property type="match status" value="1"/>
</dbReference>
<dbReference type="InterPro" id="IPR013750">
    <property type="entry name" value="GHMP_kinase_C_dom"/>
</dbReference>
<dbReference type="InterPro" id="IPR036554">
    <property type="entry name" value="GHMP_kinase_C_sf"/>
</dbReference>
<dbReference type="InterPro" id="IPR006204">
    <property type="entry name" value="GHMP_kinase_N_dom"/>
</dbReference>
<dbReference type="InterPro" id="IPR004424">
    <property type="entry name" value="IspE"/>
</dbReference>
<dbReference type="InterPro" id="IPR020568">
    <property type="entry name" value="Ribosomal_Su5_D2-typ_SF"/>
</dbReference>
<dbReference type="InterPro" id="IPR014721">
    <property type="entry name" value="Ribsml_uS5_D2-typ_fold_subgr"/>
</dbReference>
<dbReference type="NCBIfam" id="TIGR00154">
    <property type="entry name" value="ispE"/>
    <property type="match status" value="1"/>
</dbReference>
<dbReference type="NCBIfam" id="NF002870">
    <property type="entry name" value="PRK03188.1"/>
    <property type="match status" value="1"/>
</dbReference>
<dbReference type="PANTHER" id="PTHR43527">
    <property type="entry name" value="4-DIPHOSPHOCYTIDYL-2-C-METHYL-D-ERYTHRITOL KINASE, CHLOROPLASTIC"/>
    <property type="match status" value="1"/>
</dbReference>
<dbReference type="PANTHER" id="PTHR43527:SF2">
    <property type="entry name" value="4-DIPHOSPHOCYTIDYL-2-C-METHYL-D-ERYTHRITOL KINASE, CHLOROPLASTIC"/>
    <property type="match status" value="1"/>
</dbReference>
<dbReference type="Pfam" id="PF08544">
    <property type="entry name" value="GHMP_kinases_C"/>
    <property type="match status" value="1"/>
</dbReference>
<dbReference type="Pfam" id="PF00288">
    <property type="entry name" value="GHMP_kinases_N"/>
    <property type="match status" value="1"/>
</dbReference>
<dbReference type="PIRSF" id="PIRSF010376">
    <property type="entry name" value="IspE"/>
    <property type="match status" value="1"/>
</dbReference>
<dbReference type="SUPFAM" id="SSF55060">
    <property type="entry name" value="GHMP Kinase, C-terminal domain"/>
    <property type="match status" value="1"/>
</dbReference>
<dbReference type="SUPFAM" id="SSF54211">
    <property type="entry name" value="Ribosomal protein S5 domain 2-like"/>
    <property type="match status" value="1"/>
</dbReference>
<keyword id="KW-0067">ATP-binding</keyword>
<keyword id="KW-0414">Isoprene biosynthesis</keyword>
<keyword id="KW-0418">Kinase</keyword>
<keyword id="KW-0547">Nucleotide-binding</keyword>
<keyword id="KW-0808">Transferase</keyword>
<gene>
    <name evidence="2" type="primary">ispE</name>
    <name type="ordered locus">BCG_1068</name>
</gene>
<name>ISPE_MYCBP</name>
<protein>
    <recommendedName>
        <fullName evidence="2">4-diphosphocytidyl-2-C-methyl-D-erythritol kinase</fullName>
        <shortName evidence="2">CMK</shortName>
        <ecNumber evidence="2">2.7.1.148</ecNumber>
    </recommendedName>
    <alternativeName>
        <fullName evidence="2">4-(cytidine-5'-diphospho)-2-C-methyl-D-erythritol kinase</fullName>
    </alternativeName>
</protein>
<accession>A1KHE9</accession>
<comment type="function">
    <text evidence="2">Catalyzes the phosphorylation of the position 2 hydroxy group of 4-diphosphocytidyl-2C-methyl-D-erythritol.</text>
</comment>
<comment type="catalytic activity">
    <reaction evidence="2">
        <text>4-CDP-2-C-methyl-D-erythritol + ATP = 4-CDP-2-C-methyl-D-erythritol 2-phosphate + ADP + H(+)</text>
        <dbReference type="Rhea" id="RHEA:18437"/>
        <dbReference type="ChEBI" id="CHEBI:15378"/>
        <dbReference type="ChEBI" id="CHEBI:30616"/>
        <dbReference type="ChEBI" id="CHEBI:57823"/>
        <dbReference type="ChEBI" id="CHEBI:57919"/>
        <dbReference type="ChEBI" id="CHEBI:456216"/>
        <dbReference type="EC" id="2.7.1.148"/>
    </reaction>
</comment>
<comment type="pathway">
    <text evidence="2">Isoprenoid biosynthesis; isopentenyl diphosphate biosynthesis via DXP pathway; isopentenyl diphosphate from 1-deoxy-D-xylulose 5-phosphate: step 3/6.</text>
</comment>
<comment type="similarity">
    <text evidence="2">Belongs to the GHMP kinase family. IspE subfamily.</text>
</comment>
<comment type="sequence caution" evidence="1">
    <conflict type="erroneous initiation">
        <sequence resource="EMBL-CDS" id="CAL71055"/>
    </conflict>
    <text>Truncated N-terminus.</text>
</comment>
<reference key="1">
    <citation type="journal article" date="2007" name="Proc. Natl. Acad. Sci. U.S.A.">
        <title>Genome plasticity of BCG and impact on vaccine efficacy.</title>
        <authorList>
            <person name="Brosch R."/>
            <person name="Gordon S.V."/>
            <person name="Garnier T."/>
            <person name="Eiglmeier K."/>
            <person name="Frigui W."/>
            <person name="Valenti P."/>
            <person name="Dos Santos S."/>
            <person name="Duthoy S."/>
            <person name="Lacroix C."/>
            <person name="Garcia-Pelayo C."/>
            <person name="Inwald J.K."/>
            <person name="Golby P."/>
            <person name="Garcia J.N."/>
            <person name="Hewinson R.G."/>
            <person name="Behr M.A."/>
            <person name="Quail M.A."/>
            <person name="Churcher C."/>
            <person name="Barrell B.G."/>
            <person name="Parkhill J."/>
            <person name="Cole S.T."/>
        </authorList>
    </citation>
    <scope>NUCLEOTIDE SEQUENCE [LARGE SCALE GENOMIC DNA]</scope>
    <source>
        <strain>BCG / Pasteur 1173P2</strain>
    </source>
</reference>
<feature type="chain" id="PRO_1000007861" description="4-diphosphocytidyl-2-C-methyl-D-erythritol kinase">
    <location>
        <begin position="1"/>
        <end position="318"/>
    </location>
</feature>
<feature type="active site" evidence="2">
    <location>
        <position position="25"/>
    </location>
</feature>
<feature type="active site" evidence="2">
    <location>
        <position position="152"/>
    </location>
</feature>
<feature type="binding site" evidence="2">
    <location>
        <begin position="110"/>
        <end position="120"/>
    </location>
    <ligand>
        <name>ATP</name>
        <dbReference type="ChEBI" id="CHEBI:30616"/>
    </ligand>
</feature>
<proteinExistence type="inferred from homology"/>
<evidence type="ECO:0000250" key="1">
    <source>
        <dbReference type="UniProtKB" id="P9WKG7"/>
    </source>
</evidence>
<evidence type="ECO:0000255" key="2">
    <source>
        <dbReference type="HAMAP-Rule" id="MF_00061"/>
    </source>
</evidence>
<organism>
    <name type="scientific">Mycobacterium bovis (strain BCG / Pasteur 1173P2)</name>
    <dbReference type="NCBI Taxonomy" id="410289"/>
    <lineage>
        <taxon>Bacteria</taxon>
        <taxon>Bacillati</taxon>
        <taxon>Actinomycetota</taxon>
        <taxon>Actinomycetes</taxon>
        <taxon>Mycobacteriales</taxon>
        <taxon>Mycobacteriaceae</taxon>
        <taxon>Mycobacterium</taxon>
        <taxon>Mycobacterium tuberculosis complex</taxon>
    </lineage>
</organism>
<sequence>MSASDGNTAELWVPTGSVTVRVPGKVNLYLAVGDRREDGYHELTTVFHAVSLVDEVTVRNADVLSLELVGEGADQLPTDERNLAWQAAELMAEHVGRAPDVSIMIDKSIPVAGGMAGGSADAAAVLVAMNSLWELNVPRRDLRMLAARLGSDVPFALHGGTALGTGRGEELATVLSRNTFHWVLAFADSGLLTSAVYNELDRLREVGDPPRLGEPGPVLAALAAGDPDQLAPLLGNEMQAAAVSLDPALARALRAGVEAGALAGIVSGSGPTCAFLCTSASSAIDVGAQLSGAGVCRTVRVATGPVPGARVVSAPTEV</sequence>